<organism>
    <name type="scientific">Staphylococcus aureus (strain JH9)</name>
    <dbReference type="NCBI Taxonomy" id="359786"/>
    <lineage>
        <taxon>Bacteria</taxon>
        <taxon>Bacillati</taxon>
        <taxon>Bacillota</taxon>
        <taxon>Bacilli</taxon>
        <taxon>Bacillales</taxon>
        <taxon>Staphylococcaceae</taxon>
        <taxon>Staphylococcus</taxon>
    </lineage>
</organism>
<sequence length="782" mass="88714">MRQKTLDVLEFEKIKSLVANETISDLGLEKVNQMMPATNFETVVFQMEETDEIAQIYNKHRLPSLSGLSKVSAFIHRADIGGVLNVSELNLIKRLIQVQNQFKTFYNQLVEEDEGVKYPILDDKMNQLPVLTDLFHQINETCDTYDLYDNASYELQGIRSKISSTNQRIRQNLDRIVKSQANQKKLSDAIVTVRNERNVIPVKAEYRQDFNGIVHDQSASGQTLYIEPSSVVEMNNQISRLRHDEAIEKERILTQLTGYVAADKDALLVTEQVMGQLDFLIAKARYSRSIKGTKPIFKEERTVYLPKAYHPLLNRETVVANTIEFMEDIETVIITGPNTGGKTVTLKTLGLIIVMAQSGLLIPTLDGSQLSVFKNVYCDIGDEQSIEQSLSTFSSHMTNIVEILKHADKHSLVLFDELGAGTDPSEGAALAMSILDHVRKIGSLVMATTHYPELKAYSYNREGVMNASVEFDVDTLSPTYKLLMGVPGRSNAFDISKKLGLSLNIINKAKTMIGTDEKEINEMIESLERNYKRVETQRLELDRLVKEAEQVHDDLSKQYQQFQNYEKSLIEEAKEKANQKIKAATKEADDIIKDLRQLREQKGADVKEHELIDKKKRLDDHYEAKSIKQNVQKQKYDKIVAGDEVKVLSYGQKGEVLEIVNDEEAIVQMGIIKMKLPIEDLEKKQKEKVKPTKMVTRQNRQTIKTELDLRGYRYEDALIELDQYLDQAVLSNYEQVYIIHGKGTGALQKGVQQHLKKHKSVSDFRGGMPSEGGFGVTVATLK</sequence>
<name>MUTS2_STAA9</name>
<proteinExistence type="inferred from homology"/>
<protein>
    <recommendedName>
        <fullName evidence="1">Endonuclease MutS2</fullName>
        <ecNumber evidence="1">3.1.-.-</ecNumber>
    </recommendedName>
    <alternativeName>
        <fullName evidence="1">Ribosome-associated protein quality control-upstream factor</fullName>
        <shortName evidence="1">RQC-upstream factor</shortName>
        <shortName evidence="1">RqcU</shortName>
        <ecNumber evidence="1">3.6.4.-</ecNumber>
    </alternativeName>
</protein>
<accession>A5IS30</accession>
<reference key="1">
    <citation type="submission" date="2007-05" db="EMBL/GenBank/DDBJ databases">
        <title>Complete sequence of chromosome of Staphylococcus aureus subsp. aureus JH9.</title>
        <authorList>
            <consortium name="US DOE Joint Genome Institute"/>
            <person name="Copeland A."/>
            <person name="Lucas S."/>
            <person name="Lapidus A."/>
            <person name="Barry K."/>
            <person name="Detter J.C."/>
            <person name="Glavina del Rio T."/>
            <person name="Hammon N."/>
            <person name="Israni S."/>
            <person name="Pitluck S."/>
            <person name="Chain P."/>
            <person name="Malfatti S."/>
            <person name="Shin M."/>
            <person name="Vergez L."/>
            <person name="Schmutz J."/>
            <person name="Larimer F."/>
            <person name="Land M."/>
            <person name="Hauser L."/>
            <person name="Kyrpides N."/>
            <person name="Kim E."/>
            <person name="Tomasz A."/>
            <person name="Richardson P."/>
        </authorList>
    </citation>
    <scope>NUCLEOTIDE SEQUENCE [LARGE SCALE GENOMIC DNA]</scope>
    <source>
        <strain>JH9</strain>
    </source>
</reference>
<gene>
    <name evidence="1" type="primary">mutS2</name>
    <name evidence="1" type="synonym">rqcU</name>
    <name type="ordered locus">SaurJH9_1203</name>
</gene>
<keyword id="KW-0067">ATP-binding</keyword>
<keyword id="KW-0238">DNA-binding</keyword>
<keyword id="KW-0255">Endonuclease</keyword>
<keyword id="KW-0378">Hydrolase</keyword>
<keyword id="KW-0540">Nuclease</keyword>
<keyword id="KW-0547">Nucleotide-binding</keyword>
<keyword id="KW-0694">RNA-binding</keyword>
<keyword id="KW-0699">rRNA-binding</keyword>
<dbReference type="EC" id="3.1.-.-" evidence="1"/>
<dbReference type="EC" id="3.6.4.-" evidence="1"/>
<dbReference type="EMBL" id="CP000703">
    <property type="protein sequence ID" value="ABQ49003.1"/>
    <property type="molecule type" value="Genomic_DNA"/>
</dbReference>
<dbReference type="RefSeq" id="WP_001249274.1">
    <property type="nucleotide sequence ID" value="NC_009487.1"/>
</dbReference>
<dbReference type="SMR" id="A5IS30"/>
<dbReference type="KEGG" id="saj:SaurJH9_1203"/>
<dbReference type="HOGENOM" id="CLU_011252_2_1_9"/>
<dbReference type="GO" id="GO:0005524">
    <property type="term" value="F:ATP binding"/>
    <property type="evidence" value="ECO:0007669"/>
    <property type="project" value="UniProtKB-UniRule"/>
</dbReference>
<dbReference type="GO" id="GO:0016887">
    <property type="term" value="F:ATP hydrolysis activity"/>
    <property type="evidence" value="ECO:0007669"/>
    <property type="project" value="InterPro"/>
</dbReference>
<dbReference type="GO" id="GO:0140664">
    <property type="term" value="F:ATP-dependent DNA damage sensor activity"/>
    <property type="evidence" value="ECO:0007669"/>
    <property type="project" value="InterPro"/>
</dbReference>
<dbReference type="GO" id="GO:0004519">
    <property type="term" value="F:endonuclease activity"/>
    <property type="evidence" value="ECO:0007669"/>
    <property type="project" value="UniProtKB-UniRule"/>
</dbReference>
<dbReference type="GO" id="GO:0030983">
    <property type="term" value="F:mismatched DNA binding"/>
    <property type="evidence" value="ECO:0007669"/>
    <property type="project" value="InterPro"/>
</dbReference>
<dbReference type="GO" id="GO:0043023">
    <property type="term" value="F:ribosomal large subunit binding"/>
    <property type="evidence" value="ECO:0007669"/>
    <property type="project" value="UniProtKB-UniRule"/>
</dbReference>
<dbReference type="GO" id="GO:0019843">
    <property type="term" value="F:rRNA binding"/>
    <property type="evidence" value="ECO:0007669"/>
    <property type="project" value="UniProtKB-UniRule"/>
</dbReference>
<dbReference type="GO" id="GO:0006298">
    <property type="term" value="P:mismatch repair"/>
    <property type="evidence" value="ECO:0007669"/>
    <property type="project" value="InterPro"/>
</dbReference>
<dbReference type="GO" id="GO:0045910">
    <property type="term" value="P:negative regulation of DNA recombination"/>
    <property type="evidence" value="ECO:0007669"/>
    <property type="project" value="InterPro"/>
</dbReference>
<dbReference type="GO" id="GO:0072344">
    <property type="term" value="P:rescue of stalled ribosome"/>
    <property type="evidence" value="ECO:0007669"/>
    <property type="project" value="UniProtKB-UniRule"/>
</dbReference>
<dbReference type="CDD" id="cd03280">
    <property type="entry name" value="ABC_MutS2"/>
    <property type="match status" value="1"/>
</dbReference>
<dbReference type="FunFam" id="3.30.1370.110:FF:000006">
    <property type="entry name" value="Endonuclease MutS2"/>
    <property type="match status" value="1"/>
</dbReference>
<dbReference type="FunFam" id="3.40.50.300:FF:000830">
    <property type="entry name" value="Endonuclease MutS2"/>
    <property type="match status" value="1"/>
</dbReference>
<dbReference type="Gene3D" id="3.30.1370.110">
    <property type="match status" value="1"/>
</dbReference>
<dbReference type="Gene3D" id="3.40.50.300">
    <property type="entry name" value="P-loop containing nucleotide triphosphate hydrolases"/>
    <property type="match status" value="1"/>
</dbReference>
<dbReference type="HAMAP" id="MF_00092">
    <property type="entry name" value="MutS2"/>
    <property type="match status" value="1"/>
</dbReference>
<dbReference type="InterPro" id="IPR000432">
    <property type="entry name" value="DNA_mismatch_repair_MutS_C"/>
</dbReference>
<dbReference type="InterPro" id="IPR007696">
    <property type="entry name" value="DNA_mismatch_repair_MutS_core"/>
</dbReference>
<dbReference type="InterPro" id="IPR036187">
    <property type="entry name" value="DNA_mismatch_repair_MutS_sf"/>
</dbReference>
<dbReference type="InterPro" id="IPR046893">
    <property type="entry name" value="MSSS"/>
</dbReference>
<dbReference type="InterPro" id="IPR045076">
    <property type="entry name" value="MutS"/>
</dbReference>
<dbReference type="InterPro" id="IPR005747">
    <property type="entry name" value="MutS2"/>
</dbReference>
<dbReference type="InterPro" id="IPR027417">
    <property type="entry name" value="P-loop_NTPase"/>
</dbReference>
<dbReference type="InterPro" id="IPR002625">
    <property type="entry name" value="Smr_dom"/>
</dbReference>
<dbReference type="InterPro" id="IPR036063">
    <property type="entry name" value="Smr_dom_sf"/>
</dbReference>
<dbReference type="NCBIfam" id="TIGR01069">
    <property type="entry name" value="mutS2"/>
    <property type="match status" value="1"/>
</dbReference>
<dbReference type="PANTHER" id="PTHR48466:SF2">
    <property type="entry name" value="OS10G0509000 PROTEIN"/>
    <property type="match status" value="1"/>
</dbReference>
<dbReference type="PANTHER" id="PTHR48466">
    <property type="entry name" value="OS10G0509000 PROTEIN-RELATED"/>
    <property type="match status" value="1"/>
</dbReference>
<dbReference type="Pfam" id="PF20297">
    <property type="entry name" value="MSSS"/>
    <property type="match status" value="1"/>
</dbReference>
<dbReference type="Pfam" id="PF00488">
    <property type="entry name" value="MutS_V"/>
    <property type="match status" value="1"/>
</dbReference>
<dbReference type="Pfam" id="PF01713">
    <property type="entry name" value="Smr"/>
    <property type="match status" value="1"/>
</dbReference>
<dbReference type="PIRSF" id="PIRSF005814">
    <property type="entry name" value="MutS_YshD"/>
    <property type="match status" value="1"/>
</dbReference>
<dbReference type="SMART" id="SM00534">
    <property type="entry name" value="MUTSac"/>
    <property type="match status" value="1"/>
</dbReference>
<dbReference type="SMART" id="SM00533">
    <property type="entry name" value="MUTSd"/>
    <property type="match status" value="1"/>
</dbReference>
<dbReference type="SMART" id="SM00463">
    <property type="entry name" value="SMR"/>
    <property type="match status" value="1"/>
</dbReference>
<dbReference type="SUPFAM" id="SSF48334">
    <property type="entry name" value="DNA repair protein MutS, domain III"/>
    <property type="match status" value="1"/>
</dbReference>
<dbReference type="SUPFAM" id="SSF52540">
    <property type="entry name" value="P-loop containing nucleoside triphosphate hydrolases"/>
    <property type="match status" value="1"/>
</dbReference>
<dbReference type="SUPFAM" id="SSF160443">
    <property type="entry name" value="SMR domain-like"/>
    <property type="match status" value="1"/>
</dbReference>
<dbReference type="PROSITE" id="PS00486">
    <property type="entry name" value="DNA_MISMATCH_REPAIR_2"/>
    <property type="match status" value="1"/>
</dbReference>
<dbReference type="PROSITE" id="PS50828">
    <property type="entry name" value="SMR"/>
    <property type="match status" value="1"/>
</dbReference>
<evidence type="ECO:0000255" key="1">
    <source>
        <dbReference type="HAMAP-Rule" id="MF_00092"/>
    </source>
</evidence>
<feature type="chain" id="PRO_1000093381" description="Endonuclease MutS2">
    <location>
        <begin position="1"/>
        <end position="782"/>
    </location>
</feature>
<feature type="domain" description="Smr" evidence="1">
    <location>
        <begin position="707"/>
        <end position="782"/>
    </location>
</feature>
<feature type="binding site" evidence="1">
    <location>
        <begin position="336"/>
        <end position="343"/>
    </location>
    <ligand>
        <name>ATP</name>
        <dbReference type="ChEBI" id="CHEBI:30616"/>
    </ligand>
</feature>
<comment type="function">
    <text evidence="1">Endonuclease that is involved in the suppression of homologous recombination and thus may have a key role in the control of bacterial genetic diversity.</text>
</comment>
<comment type="function">
    <text evidence="1">Acts as a ribosome collision sensor, splitting the ribosome into its 2 subunits. Detects stalled/collided 70S ribosomes which it binds and splits by an ATP-hydrolysis driven conformational change. Acts upstream of the ribosome quality control system (RQC), a ribosome-associated complex that mediates the extraction of incompletely synthesized nascent chains from stalled ribosomes and their subsequent degradation. Probably generates substrates for RQC.</text>
</comment>
<comment type="subunit">
    <text evidence="1">Homodimer. Binds to stalled ribosomes, contacting rRNA.</text>
</comment>
<comment type="similarity">
    <text evidence="1">Belongs to the DNA mismatch repair MutS family. MutS2 subfamily.</text>
</comment>